<proteinExistence type="evidence at protein level"/>
<gene>
    <name evidence="1" type="primary">Ndufaf8</name>
</gene>
<organism>
    <name type="scientific">Mus musculus</name>
    <name type="common">Mouse</name>
    <dbReference type="NCBI Taxonomy" id="10090"/>
    <lineage>
        <taxon>Eukaryota</taxon>
        <taxon>Metazoa</taxon>
        <taxon>Chordata</taxon>
        <taxon>Craniata</taxon>
        <taxon>Vertebrata</taxon>
        <taxon>Euteleostomi</taxon>
        <taxon>Mammalia</taxon>
        <taxon>Eutheria</taxon>
        <taxon>Euarchontoglires</taxon>
        <taxon>Glires</taxon>
        <taxon>Rodentia</taxon>
        <taxon>Myomorpha</taxon>
        <taxon>Muroidea</taxon>
        <taxon>Muridae</taxon>
        <taxon>Murinae</taxon>
        <taxon>Mus</taxon>
        <taxon>Mus</taxon>
    </lineage>
</organism>
<evidence type="ECO:0000250" key="1">
    <source>
        <dbReference type="UniProtKB" id="A1L188"/>
    </source>
</evidence>
<evidence type="ECO:0000255" key="2">
    <source>
        <dbReference type="PROSITE-ProRule" id="PRU01150"/>
    </source>
</evidence>
<feature type="chain" id="PRO_0000299481" description="NADH dehydrogenase [ubiquinone] 1 alpha subcomplex assembly factor 8">
    <location>
        <begin position="1"/>
        <end position="74"/>
    </location>
</feature>
<feature type="domain" description="CHCH" evidence="2">
    <location>
        <begin position="22"/>
        <end position="69"/>
    </location>
</feature>
<feature type="short sequence motif" description="Cx9C motif 1" evidence="2">
    <location>
        <begin position="25"/>
        <end position="35"/>
    </location>
</feature>
<feature type="short sequence motif" description="Cx9C motif 2" evidence="2">
    <location>
        <begin position="51"/>
        <end position="61"/>
    </location>
</feature>
<feature type="disulfide bond" evidence="2">
    <location>
        <begin position="25"/>
        <end position="61"/>
    </location>
</feature>
<feature type="disulfide bond" evidence="2">
    <location>
        <begin position="35"/>
        <end position="51"/>
    </location>
</feature>
<name>NDUF8_MOUSE</name>
<reference key="1">
    <citation type="journal article" date="2009" name="PLoS Biol.">
        <title>Lineage-specific biology revealed by a finished genome assembly of the mouse.</title>
        <authorList>
            <person name="Church D.M."/>
            <person name="Goodstadt L."/>
            <person name="Hillier L.W."/>
            <person name="Zody M.C."/>
            <person name="Goldstein S."/>
            <person name="She X."/>
            <person name="Bult C.J."/>
            <person name="Agarwala R."/>
            <person name="Cherry J.L."/>
            <person name="DiCuccio M."/>
            <person name="Hlavina W."/>
            <person name="Kapustin Y."/>
            <person name="Meric P."/>
            <person name="Maglott D."/>
            <person name="Birtle Z."/>
            <person name="Marques A.C."/>
            <person name="Graves T."/>
            <person name="Zhou S."/>
            <person name="Teague B."/>
            <person name="Potamousis K."/>
            <person name="Churas C."/>
            <person name="Place M."/>
            <person name="Herschleb J."/>
            <person name="Runnheim R."/>
            <person name="Forrest D."/>
            <person name="Amos-Landgraf J."/>
            <person name="Schwartz D.C."/>
            <person name="Cheng Z."/>
            <person name="Lindblad-Toh K."/>
            <person name="Eichler E.E."/>
            <person name="Ponting C.P."/>
        </authorList>
    </citation>
    <scope>NUCLEOTIDE SEQUENCE [LARGE SCALE GENOMIC DNA]</scope>
    <source>
        <strain>C57BL/6J</strain>
    </source>
</reference>
<reference key="2">
    <citation type="journal article" date="2004" name="Genome Res.">
        <title>The status, quality, and expansion of the NIH full-length cDNA project: the Mammalian Gene Collection (MGC).</title>
        <authorList>
            <consortium name="The MGC Project Team"/>
        </authorList>
    </citation>
    <scope>NUCLEOTIDE SEQUENCE [LARGE SCALE MRNA]</scope>
    <source>
        <tissue>Brain</tissue>
    </source>
</reference>
<reference key="3">
    <citation type="journal article" date="2010" name="Cell">
        <title>A tissue-specific atlas of mouse protein phosphorylation and expression.</title>
        <authorList>
            <person name="Huttlin E.L."/>
            <person name="Jedrychowski M.P."/>
            <person name="Elias J.E."/>
            <person name="Goswami T."/>
            <person name="Rad R."/>
            <person name="Beausoleil S.A."/>
            <person name="Villen J."/>
            <person name="Haas W."/>
            <person name="Sowa M.E."/>
            <person name="Gygi S.P."/>
        </authorList>
    </citation>
    <scope>IDENTIFICATION BY MASS SPECTROMETRY [LARGE SCALE ANALYSIS]</scope>
    <source>
        <tissue>Brain</tissue>
    </source>
</reference>
<keyword id="KW-1015">Disulfide bond</keyword>
<keyword id="KW-0496">Mitochondrion</keyword>
<keyword id="KW-1185">Reference proteome</keyword>
<comment type="function">
    <text evidence="1">Involved in the assembly of mitochondrial NADH:ubiquinone oxidoreductase complex (complex I, MT-ND1). Required to stabilize NDUFAF5.</text>
</comment>
<comment type="subunit">
    <text evidence="1">Interacts with NDUFAF5.</text>
</comment>
<comment type="subcellular location">
    <subcellularLocation>
        <location evidence="1">Mitochondrion</location>
    </subcellularLocation>
</comment>
<dbReference type="EMBL" id="AL807824">
    <property type="status" value="NOT_ANNOTATED_CDS"/>
    <property type="molecule type" value="Genomic_DNA"/>
</dbReference>
<dbReference type="EMBL" id="BC147711">
    <property type="protein sequence ID" value="AAI47712.1"/>
    <property type="molecule type" value="mRNA"/>
</dbReference>
<dbReference type="EMBL" id="BC147720">
    <property type="protein sequence ID" value="AAI47721.1"/>
    <property type="molecule type" value="mRNA"/>
</dbReference>
<dbReference type="CCDS" id="CCDS36388.1"/>
<dbReference type="RefSeq" id="NP_001103712.1">
    <property type="nucleotide sequence ID" value="NM_001110242.1"/>
</dbReference>
<dbReference type="SMR" id="A2AMZ4"/>
<dbReference type="FunCoup" id="A2AMZ4">
    <property type="interactions" value="323"/>
</dbReference>
<dbReference type="STRING" id="10090.ENSMUSP00000101830"/>
<dbReference type="PhosphoSitePlus" id="A2AMZ4"/>
<dbReference type="PaxDb" id="10090-ENSMUSP00000101830"/>
<dbReference type="PeptideAtlas" id="A2AMZ4"/>
<dbReference type="ProteomicsDB" id="252871"/>
<dbReference type="Pumba" id="A2AMZ4"/>
<dbReference type="Ensembl" id="ENSMUST00000106223.4">
    <property type="protein sequence ID" value="ENSMUSP00000101830.3"/>
    <property type="gene ID" value="ENSMUSG00000078572.4"/>
</dbReference>
<dbReference type="GeneID" id="208501"/>
<dbReference type="KEGG" id="mmu:208501"/>
<dbReference type="UCSC" id="uc007mru.2">
    <property type="organism name" value="mouse"/>
</dbReference>
<dbReference type="AGR" id="MGI:1913676"/>
<dbReference type="CTD" id="284184"/>
<dbReference type="MGI" id="MGI:1913676">
    <property type="gene designation" value="Ndufaf8"/>
</dbReference>
<dbReference type="VEuPathDB" id="HostDB:ENSMUSG00000078572"/>
<dbReference type="eggNOG" id="ENOG502SBX9">
    <property type="taxonomic scope" value="Eukaryota"/>
</dbReference>
<dbReference type="GeneTree" id="ENSGT00520000061927"/>
<dbReference type="HOGENOM" id="CLU_188562_0_0_1"/>
<dbReference type="InParanoid" id="A2AMZ4"/>
<dbReference type="OMA" id="KKDLCAQ"/>
<dbReference type="OrthoDB" id="22726at9989"/>
<dbReference type="PhylomeDB" id="A2AMZ4"/>
<dbReference type="Reactome" id="R-MMU-6799198">
    <property type="pathway name" value="Complex I biogenesis"/>
</dbReference>
<dbReference type="BioGRID-ORCS" id="208501">
    <property type="hits" value="20 hits in 79 CRISPR screens"/>
</dbReference>
<dbReference type="ChiTaRS" id="Ndufaf8">
    <property type="organism name" value="mouse"/>
</dbReference>
<dbReference type="PRO" id="PR:A2AMZ4"/>
<dbReference type="Proteomes" id="UP000000589">
    <property type="component" value="Chromosome 11"/>
</dbReference>
<dbReference type="RNAct" id="A2AMZ4">
    <property type="molecule type" value="protein"/>
</dbReference>
<dbReference type="Bgee" id="ENSMUSG00000078572">
    <property type="expression patterns" value="Expressed in interventricular septum and 222 other cell types or tissues"/>
</dbReference>
<dbReference type="ExpressionAtlas" id="A2AMZ4">
    <property type="expression patterns" value="baseline and differential"/>
</dbReference>
<dbReference type="GO" id="GO:0005759">
    <property type="term" value="C:mitochondrial matrix"/>
    <property type="evidence" value="ECO:0007669"/>
    <property type="project" value="Ensembl"/>
</dbReference>
<dbReference type="GO" id="GO:0005739">
    <property type="term" value="C:mitochondrion"/>
    <property type="evidence" value="ECO:0007005"/>
    <property type="project" value="MGI"/>
</dbReference>
<dbReference type="GO" id="GO:0032981">
    <property type="term" value="P:mitochondrial respiratory chain complex I assembly"/>
    <property type="evidence" value="ECO:0007669"/>
    <property type="project" value="Ensembl"/>
</dbReference>
<dbReference type="InterPro" id="IPR034595">
    <property type="entry name" value="NDUFAF8"/>
</dbReference>
<dbReference type="PANTHER" id="PTHR34561">
    <property type="entry name" value="NADH DEHYDROGENASE [UBIQUINONE] 1 ALPHA SUBCOMPLEX ASSEMBLY FACTOR 8"/>
    <property type="match status" value="1"/>
</dbReference>
<dbReference type="PANTHER" id="PTHR34561:SF1">
    <property type="entry name" value="NADH DEHYDROGENASE [UBIQUINONE] 1 ALPHA SUBCOMPLEX ASSEMBLY FACTOR 8"/>
    <property type="match status" value="1"/>
</dbReference>
<dbReference type="PROSITE" id="PS51808">
    <property type="entry name" value="CHCH"/>
    <property type="match status" value="1"/>
</dbReference>
<protein>
    <recommendedName>
        <fullName evidence="1">NADH dehydrogenase [ubiquinone] 1 alpha subcomplex assembly factor 8</fullName>
    </recommendedName>
</protein>
<sequence length="74" mass="7785">MSVNGAVWGRVRSRFRAFPEHLAACGAEASAYGKCVQASTAPGGRLSKDLCVREFEALRSCFAAAAKKTMMGGS</sequence>
<accession>A2AMZ4</accession>
<accession>B2RWC2</accession>